<gene>
    <name evidence="1" type="primary">galT</name>
    <name type="ordered locus">LCA_0766</name>
</gene>
<name>GALT_LATSS</name>
<feature type="chain" id="PRO_0000169911" description="Galactose-1-phosphate uridylyltransferase">
    <location>
        <begin position="1"/>
        <end position="498"/>
    </location>
</feature>
<evidence type="ECO:0000255" key="1">
    <source>
        <dbReference type="HAMAP-Rule" id="MF_00571"/>
    </source>
</evidence>
<organism>
    <name type="scientific">Latilactobacillus sakei subsp. sakei (strain 23K)</name>
    <name type="common">Lactobacillus sakei subsp. sakei</name>
    <dbReference type="NCBI Taxonomy" id="314315"/>
    <lineage>
        <taxon>Bacteria</taxon>
        <taxon>Bacillati</taxon>
        <taxon>Bacillota</taxon>
        <taxon>Bacilli</taxon>
        <taxon>Lactobacillales</taxon>
        <taxon>Lactobacillaceae</taxon>
        <taxon>Latilactobacillus</taxon>
    </lineage>
</organism>
<protein>
    <recommendedName>
        <fullName evidence="1">Galactose-1-phosphate uridylyltransferase</fullName>
        <shortName evidence="1">Gal-1-P uridylyltransferase</shortName>
        <ecNumber evidence="1">2.7.7.12</ecNumber>
    </recommendedName>
    <alternativeName>
        <fullName evidence="1">UDP-glucose--hexose-1-phosphate uridylyltransferase</fullName>
    </alternativeName>
</protein>
<accession>Q93MM1</accession>
<accession>Q38XL0</accession>
<sequence>MQARELIQKFITKVSTFPETTYTAEDEQYLFNVVLDLVGEGDETPVVAQETTTLIDLKEALVQLAVDHQRIQDLAAERDILGAKLMDLVTPLPSAVNKRFWTLYEKDPEKALAYFYELSQANDYIKVAAIAKNIAYDVPTKYGDLEITINLSKPEKDPKQIALAKTMKQTGYPKCQLCLENEGYAGRLDFPARRNHRIVRFDLEQQTWGFQYSPYAYFNEHSIFLDGKHEPMVIDQTTFKNLLQIVKQFPGYFAGSNADLPIVGGSILTHEHYQGGRHDFPMAKAPISTPLQFAGYDDIQAGIVEWPMSVMRLTGSDAKRIETLAADILTKWQHYSDPEVQVLAQEADGTPHHTITPIARMRGDQYEIDLVLRDNQTSPEHPDGIYHPHADVQHIKKENIGLIEVMGLAILPPRLKSEMAEVEKYLCDQPNEMAAYHKTWADQIKADHSAITPANVTTLVQNEVGKVFMRVLEDAGVFKRDAKGQAAFIKFTERVNNA</sequence>
<dbReference type="EC" id="2.7.7.12" evidence="1"/>
<dbReference type="EMBL" id="AF401040">
    <property type="protein sequence ID" value="AAK92518.1"/>
    <property type="molecule type" value="Genomic_DNA"/>
</dbReference>
<dbReference type="EMBL" id="CR936503">
    <property type="protein sequence ID" value="CAI55070.1"/>
    <property type="molecule type" value="Genomic_DNA"/>
</dbReference>
<dbReference type="RefSeq" id="WP_011374473.1">
    <property type="nucleotide sequence ID" value="NC_007576.1"/>
</dbReference>
<dbReference type="STRING" id="314315.LCA_0766"/>
<dbReference type="KEGG" id="lsa:LCA_0766"/>
<dbReference type="eggNOG" id="COG4468">
    <property type="taxonomic scope" value="Bacteria"/>
</dbReference>
<dbReference type="HOGENOM" id="CLU_047799_0_0_9"/>
<dbReference type="OrthoDB" id="2293at2"/>
<dbReference type="UniPathway" id="UPA00214"/>
<dbReference type="Proteomes" id="UP000002707">
    <property type="component" value="Chromosome"/>
</dbReference>
<dbReference type="GO" id="GO:0005737">
    <property type="term" value="C:cytoplasm"/>
    <property type="evidence" value="ECO:0007669"/>
    <property type="project" value="UniProtKB-SubCell"/>
</dbReference>
<dbReference type="GO" id="GO:0008108">
    <property type="term" value="F:UDP-glucose:hexose-1-phosphate uridylyltransferase activity"/>
    <property type="evidence" value="ECO:0007669"/>
    <property type="project" value="UniProtKB-UniRule"/>
</dbReference>
<dbReference type="GO" id="GO:0006012">
    <property type="term" value="P:galactose metabolic process"/>
    <property type="evidence" value="ECO:0007669"/>
    <property type="project" value="UniProtKB-UniRule"/>
</dbReference>
<dbReference type="HAMAP" id="MF_00571">
    <property type="entry name" value="GalP_UDP_trans"/>
    <property type="match status" value="1"/>
</dbReference>
<dbReference type="InterPro" id="IPR000766">
    <property type="entry name" value="GalP_uridyl_Trfase_II"/>
</dbReference>
<dbReference type="InterPro" id="IPR023425">
    <property type="entry name" value="GalP_uridyl_Trfase_II_CS"/>
</dbReference>
<dbReference type="InterPro" id="IPR005850">
    <property type="entry name" value="GalP_Utransf_C"/>
</dbReference>
<dbReference type="InterPro" id="IPR005849">
    <property type="entry name" value="GalP_Utransf_N"/>
</dbReference>
<dbReference type="NCBIfam" id="TIGR01239">
    <property type="entry name" value="galT_2"/>
    <property type="match status" value="1"/>
</dbReference>
<dbReference type="NCBIfam" id="NF003629">
    <property type="entry name" value="PRK05270.1-2"/>
    <property type="match status" value="1"/>
</dbReference>
<dbReference type="NCBIfam" id="NF003631">
    <property type="entry name" value="PRK05270.1-5"/>
    <property type="match status" value="1"/>
</dbReference>
<dbReference type="NCBIfam" id="NF003633">
    <property type="entry name" value="PRK05270.2-2"/>
    <property type="match status" value="1"/>
</dbReference>
<dbReference type="PANTHER" id="PTHR39191:SF1">
    <property type="entry name" value="DUF4922 DOMAIN-CONTAINING PROTEIN"/>
    <property type="match status" value="1"/>
</dbReference>
<dbReference type="PANTHER" id="PTHR39191">
    <property type="entry name" value="GALACTOSE-1-PHOSPHATE URIDYLYLTRANSFERASE"/>
    <property type="match status" value="1"/>
</dbReference>
<dbReference type="Pfam" id="PF02744">
    <property type="entry name" value="GalP_UDP_tr_C"/>
    <property type="match status" value="1"/>
</dbReference>
<dbReference type="Pfam" id="PF01087">
    <property type="entry name" value="GalP_UDP_transf"/>
    <property type="match status" value="1"/>
</dbReference>
<dbReference type="PIRSF" id="PIRSF006005">
    <property type="entry name" value="GalT_BS"/>
    <property type="match status" value="1"/>
</dbReference>
<dbReference type="PROSITE" id="PS01163">
    <property type="entry name" value="GAL_P_UDP_TRANSF_II"/>
    <property type="match status" value="1"/>
</dbReference>
<proteinExistence type="inferred from homology"/>
<comment type="catalytic activity">
    <reaction evidence="1">
        <text>alpha-D-galactose 1-phosphate + UDP-alpha-D-glucose = alpha-D-glucose 1-phosphate + UDP-alpha-D-galactose</text>
        <dbReference type="Rhea" id="RHEA:13989"/>
        <dbReference type="ChEBI" id="CHEBI:58336"/>
        <dbReference type="ChEBI" id="CHEBI:58601"/>
        <dbReference type="ChEBI" id="CHEBI:58885"/>
        <dbReference type="ChEBI" id="CHEBI:66914"/>
        <dbReference type="EC" id="2.7.7.12"/>
    </reaction>
</comment>
<comment type="pathway">
    <text evidence="1">Carbohydrate metabolism; galactose metabolism.</text>
</comment>
<comment type="subcellular location">
    <subcellularLocation>
        <location evidence="1">Cytoplasm</location>
    </subcellularLocation>
</comment>
<comment type="similarity">
    <text evidence="1">Belongs to the galactose-1-phosphate uridylyltransferase type 2 family.</text>
</comment>
<reference key="1">
    <citation type="journal article" date="2002" name="Microbiology">
        <title>Physical and genetic map of the Lactobacillus sakei 23K chromosome.</title>
        <authorList>
            <person name="Dudez A.-M."/>
            <person name="Chaillou S."/>
            <person name="Hissler L."/>
            <person name="Stentz R."/>
            <person name="Champomier-Verges M.-C."/>
            <person name="Alpert C.-A."/>
            <person name="Zagorec M."/>
        </authorList>
    </citation>
    <scope>NUCLEOTIDE SEQUENCE [GENOMIC DNA]</scope>
</reference>
<reference key="2">
    <citation type="journal article" date="2005" name="Nat. Biotechnol.">
        <title>The complete genome sequence of the meat-borne lactic acid bacterium Lactobacillus sakei 23K.</title>
        <authorList>
            <person name="Chaillou S."/>
            <person name="Champomier-Verges M.-C."/>
            <person name="Cornet M."/>
            <person name="Crutz-Le Coq A.-M."/>
            <person name="Dudez A.-M."/>
            <person name="Martin V."/>
            <person name="Beaufils S."/>
            <person name="Darbon-Rongere E."/>
            <person name="Bossy R."/>
            <person name="Loux V."/>
            <person name="Zagorec M."/>
        </authorList>
    </citation>
    <scope>NUCLEOTIDE SEQUENCE [LARGE SCALE GENOMIC DNA]</scope>
    <source>
        <strain>23K</strain>
    </source>
</reference>
<keyword id="KW-0119">Carbohydrate metabolism</keyword>
<keyword id="KW-0963">Cytoplasm</keyword>
<keyword id="KW-0299">Galactose metabolism</keyword>
<keyword id="KW-0548">Nucleotidyltransferase</keyword>
<keyword id="KW-1185">Reference proteome</keyword>
<keyword id="KW-0808">Transferase</keyword>